<dbReference type="EMBL" id="AAFI02000035">
    <property type="protein sequence ID" value="EAL67431.1"/>
    <property type="molecule type" value="Genomic_DNA"/>
</dbReference>
<dbReference type="RefSeq" id="XP_641430.1">
    <property type="nucleotide sequence ID" value="XM_636338.1"/>
</dbReference>
<dbReference type="SMR" id="Q54W20"/>
<dbReference type="FunCoup" id="Q54W20">
    <property type="interactions" value="68"/>
</dbReference>
<dbReference type="STRING" id="44689.Q54W20"/>
<dbReference type="PaxDb" id="44689-DDB0215374"/>
<dbReference type="EnsemblProtists" id="EAL67431">
    <property type="protein sequence ID" value="EAL67431"/>
    <property type="gene ID" value="DDB_G0279919"/>
</dbReference>
<dbReference type="GeneID" id="8622315"/>
<dbReference type="KEGG" id="ddi:DDB_G0279919"/>
<dbReference type="dictyBase" id="DDB_G0279919">
    <property type="gene designation" value="abcD3"/>
</dbReference>
<dbReference type="VEuPathDB" id="AmoebaDB:DDB_G0279919"/>
<dbReference type="eggNOG" id="KOG0060">
    <property type="taxonomic scope" value="Eukaryota"/>
</dbReference>
<dbReference type="HOGENOM" id="CLU_007587_7_0_1"/>
<dbReference type="InParanoid" id="Q54W20"/>
<dbReference type="OMA" id="YNYQAYV"/>
<dbReference type="PhylomeDB" id="Q54W20"/>
<dbReference type="Reactome" id="R-DDI-1369062">
    <property type="pathway name" value="ABC transporters in lipid homeostasis"/>
</dbReference>
<dbReference type="Reactome" id="R-DDI-2046105">
    <property type="pathway name" value="Linoleic acid (LA) metabolism"/>
</dbReference>
<dbReference type="Reactome" id="R-DDI-2046106">
    <property type="pathway name" value="alpha-linolenic acid (ALA) metabolism"/>
</dbReference>
<dbReference type="Reactome" id="R-DDI-390247">
    <property type="pathway name" value="Beta-oxidation of very long chain fatty acids"/>
</dbReference>
<dbReference type="Reactome" id="R-DDI-9603798">
    <property type="pathway name" value="Class I peroxisomal membrane protein import"/>
</dbReference>
<dbReference type="Reactome" id="R-DDI-9758881">
    <property type="pathway name" value="Uptake of dietary cobalamins into enterocytes"/>
</dbReference>
<dbReference type="Reactome" id="R-DDI-9758890">
    <property type="pathway name" value="Transport of RCbl within the body"/>
</dbReference>
<dbReference type="PRO" id="PR:Q54W20"/>
<dbReference type="Proteomes" id="UP000002195">
    <property type="component" value="Chromosome 3"/>
</dbReference>
<dbReference type="GO" id="GO:0043190">
    <property type="term" value="C:ATP-binding cassette (ABC) transporter complex"/>
    <property type="evidence" value="ECO:0000317"/>
    <property type="project" value="dictyBase"/>
</dbReference>
<dbReference type="GO" id="GO:0005778">
    <property type="term" value="C:peroxisomal membrane"/>
    <property type="evidence" value="ECO:0000318"/>
    <property type="project" value="GO_Central"/>
</dbReference>
<dbReference type="GO" id="GO:0140359">
    <property type="term" value="F:ABC-type transporter activity"/>
    <property type="evidence" value="ECO:0007669"/>
    <property type="project" value="InterPro"/>
</dbReference>
<dbReference type="GO" id="GO:0005524">
    <property type="term" value="F:ATP binding"/>
    <property type="evidence" value="ECO:0000318"/>
    <property type="project" value="GO_Central"/>
</dbReference>
<dbReference type="GO" id="GO:0016887">
    <property type="term" value="F:ATP hydrolysis activity"/>
    <property type="evidence" value="ECO:0007669"/>
    <property type="project" value="InterPro"/>
</dbReference>
<dbReference type="GO" id="GO:0042626">
    <property type="term" value="F:ATPase-coupled transmembrane transporter activity"/>
    <property type="evidence" value="ECO:0000318"/>
    <property type="project" value="GO_Central"/>
</dbReference>
<dbReference type="GO" id="GO:0005324">
    <property type="term" value="F:long-chain fatty acid transmembrane transporter activity"/>
    <property type="evidence" value="ECO:0000318"/>
    <property type="project" value="GO_Central"/>
</dbReference>
<dbReference type="GO" id="GO:0006635">
    <property type="term" value="P:fatty acid beta-oxidation"/>
    <property type="evidence" value="ECO:0000318"/>
    <property type="project" value="GO_Central"/>
</dbReference>
<dbReference type="GO" id="GO:0015910">
    <property type="term" value="P:long-chain fatty acid import into peroxisome"/>
    <property type="evidence" value="ECO:0000318"/>
    <property type="project" value="GO_Central"/>
</dbReference>
<dbReference type="GO" id="GO:0007031">
    <property type="term" value="P:peroxisome organization"/>
    <property type="evidence" value="ECO:0000318"/>
    <property type="project" value="GO_Central"/>
</dbReference>
<dbReference type="GO" id="GO:0042760">
    <property type="term" value="P:very long-chain fatty acid catabolic process"/>
    <property type="evidence" value="ECO:0000318"/>
    <property type="project" value="GO_Central"/>
</dbReference>
<dbReference type="CDD" id="cd03223">
    <property type="entry name" value="ABCD_peroxisomal_ALDP"/>
    <property type="match status" value="1"/>
</dbReference>
<dbReference type="FunFam" id="1.20.1560.10:FF:000460">
    <property type="entry name" value="ABC transporter D family member 1"/>
    <property type="match status" value="1"/>
</dbReference>
<dbReference type="FunFam" id="3.40.50.300:FF:005829">
    <property type="entry name" value="ABC transporter D family member 3"/>
    <property type="match status" value="1"/>
</dbReference>
<dbReference type="Gene3D" id="1.20.1560.10">
    <property type="entry name" value="ABC transporter type 1, transmembrane domain"/>
    <property type="match status" value="1"/>
</dbReference>
<dbReference type="Gene3D" id="3.40.50.300">
    <property type="entry name" value="P-loop containing nucleotide triphosphate hydrolases"/>
    <property type="match status" value="1"/>
</dbReference>
<dbReference type="InterPro" id="IPR003593">
    <property type="entry name" value="AAA+_ATPase"/>
</dbReference>
<dbReference type="InterPro" id="IPR011527">
    <property type="entry name" value="ABC1_TM_dom"/>
</dbReference>
<dbReference type="InterPro" id="IPR036640">
    <property type="entry name" value="ABC1_TM_sf"/>
</dbReference>
<dbReference type="InterPro" id="IPR003439">
    <property type="entry name" value="ABC_transporter-like_ATP-bd"/>
</dbReference>
<dbReference type="InterPro" id="IPR017871">
    <property type="entry name" value="ABC_transporter-like_CS"/>
</dbReference>
<dbReference type="InterPro" id="IPR050835">
    <property type="entry name" value="ABC_transporter_sub-D"/>
</dbReference>
<dbReference type="InterPro" id="IPR027417">
    <property type="entry name" value="P-loop_NTPase"/>
</dbReference>
<dbReference type="PANTHER" id="PTHR11384">
    <property type="entry name" value="ATP-BINDING CASSETTE, SUB-FAMILY D MEMBER"/>
    <property type="match status" value="1"/>
</dbReference>
<dbReference type="PANTHER" id="PTHR11384:SF59">
    <property type="entry name" value="LYSOSOMAL COBALAMIN TRANSPORTER ABCD4"/>
    <property type="match status" value="1"/>
</dbReference>
<dbReference type="Pfam" id="PF06472">
    <property type="entry name" value="ABC_membrane_2"/>
    <property type="match status" value="1"/>
</dbReference>
<dbReference type="Pfam" id="PF00005">
    <property type="entry name" value="ABC_tran"/>
    <property type="match status" value="1"/>
</dbReference>
<dbReference type="SMART" id="SM00382">
    <property type="entry name" value="AAA"/>
    <property type="match status" value="1"/>
</dbReference>
<dbReference type="SUPFAM" id="SSF90123">
    <property type="entry name" value="ABC transporter transmembrane region"/>
    <property type="match status" value="1"/>
</dbReference>
<dbReference type="SUPFAM" id="SSF52540">
    <property type="entry name" value="P-loop containing nucleoside triphosphate hydrolases"/>
    <property type="match status" value="1"/>
</dbReference>
<dbReference type="PROSITE" id="PS50929">
    <property type="entry name" value="ABC_TM1F"/>
    <property type="match status" value="1"/>
</dbReference>
<dbReference type="PROSITE" id="PS00211">
    <property type="entry name" value="ABC_TRANSPORTER_1"/>
    <property type="match status" value="1"/>
</dbReference>
<dbReference type="PROSITE" id="PS50893">
    <property type="entry name" value="ABC_TRANSPORTER_2"/>
    <property type="match status" value="1"/>
</dbReference>
<comment type="subcellular location">
    <subcellularLocation>
        <location evidence="3">Membrane</location>
        <topology evidence="3">Multi-pass membrane protein</topology>
    </subcellularLocation>
</comment>
<comment type="similarity">
    <text evidence="5">Belongs to the ABC transporter superfamily. ABCD family. Peroxisomal fatty acyl CoA transporter (TC 3.A.1.203) subfamily.</text>
</comment>
<sequence length="750" mass="86589">MKKNNVNNITETLNSSSSSSSSSGSSSDEEVKSKLNFNQTDEMLKKIKENKFDWALFKRFIKIVIILYEKPVIPLLLFLLLFGSGVSQTYISKFTGILLSNIYGSLTSGDKFLFVSSLIKGCFAIGGSALFDAIIKFIVSIMAWNWRKTLCLYIQNVYFKKSLFYKILAFDDRIDNPDQRITSDIDNFTTLLSSIVSQCITGPMVVVYYTYLCYTTIDWYAPLIVYGYFFLGYFINKLVMSPMVSINYLQDKLEGDFRYLHQRIRNFSESIALYNLSKEKQQKKSTTSVDNLDYYDDDHHYHHHHDDGEESDEYTDKTKIINRKNKNSKNKRSALLKRSNKNIKNEELLVEEEQAKQQFEALLKNKKRVIFWQFGLNTTSDMFTFFSPLINYFIISIPVFFLSSKAALEPAQVTVQSYNCIMLASGFSQYINVSQSISDLSGYISRISTMIEVCKKVMGDTSLDIEITKLNEKDKTKSLPNSLIINNRDTSINTDFRHISLNEGESITLDDVTYFTPKGTQLYEKISICIKKGNNLLIMGPSGSGKSSLIRIINGLWPFFKGSINRPENEDMFFLPQQPYLIFGTLEEQILYPFSKKQKRIPKSIMRELFQRFDIDYLLDRERFIKKSAQVNDLTHNWLNQLSPGEQQLIAIIRLIYHKPKFALMDESTSSIPQSLEERVYSVAKELGITIISVGHRISLLKYHSTLLRFDKDKNWYLEDIINQNNQSNNINTINIDNNTNKIAEDSVFD</sequence>
<feature type="chain" id="PRO_0000370851" description="ABC transporter D family member 3">
    <location>
        <begin position="1"/>
        <end position="750"/>
    </location>
</feature>
<feature type="transmembrane region" description="Helical" evidence="3">
    <location>
        <begin position="63"/>
        <end position="83"/>
    </location>
</feature>
<feature type="transmembrane region" description="Helical" evidence="3">
    <location>
        <begin position="123"/>
        <end position="143"/>
    </location>
</feature>
<feature type="transmembrane region" description="Helical" evidence="3">
    <location>
        <begin position="188"/>
        <end position="208"/>
    </location>
</feature>
<feature type="transmembrane region" description="Helical" evidence="3">
    <location>
        <begin position="215"/>
        <end position="235"/>
    </location>
</feature>
<feature type="transmembrane region" description="Helical" evidence="3">
    <location>
        <begin position="382"/>
        <end position="402"/>
    </location>
</feature>
<feature type="domain" description="ABC transmembrane type-1" evidence="3">
    <location>
        <begin position="74"/>
        <end position="362"/>
    </location>
</feature>
<feature type="domain" description="ABC transporter" evidence="2">
    <location>
        <begin position="507"/>
        <end position="737"/>
    </location>
</feature>
<feature type="region of interest" description="Disordered" evidence="4">
    <location>
        <begin position="1"/>
        <end position="32"/>
    </location>
</feature>
<feature type="coiled-coil region" evidence="1">
    <location>
        <begin position="334"/>
        <end position="370"/>
    </location>
</feature>
<feature type="compositionally biased region" description="Polar residues" evidence="4">
    <location>
        <begin position="1"/>
        <end position="14"/>
    </location>
</feature>
<feature type="compositionally biased region" description="Low complexity" evidence="4">
    <location>
        <begin position="15"/>
        <end position="26"/>
    </location>
</feature>
<feature type="binding site" evidence="2">
    <location>
        <begin position="540"/>
        <end position="547"/>
    </location>
    <ligand>
        <name>ATP</name>
        <dbReference type="ChEBI" id="CHEBI:30616"/>
    </ligand>
</feature>
<protein>
    <recommendedName>
        <fullName>ABC transporter D family member 3</fullName>
    </recommendedName>
    <alternativeName>
        <fullName>ABC transporter ABCD.3</fullName>
    </alternativeName>
</protein>
<proteinExistence type="inferred from homology"/>
<name>ABCD3_DICDI</name>
<keyword id="KW-0067">ATP-binding</keyword>
<keyword id="KW-0175">Coiled coil</keyword>
<keyword id="KW-0472">Membrane</keyword>
<keyword id="KW-0547">Nucleotide-binding</keyword>
<keyword id="KW-1185">Reference proteome</keyword>
<keyword id="KW-0812">Transmembrane</keyword>
<keyword id="KW-1133">Transmembrane helix</keyword>
<keyword id="KW-0813">Transport</keyword>
<gene>
    <name type="primary">abcD3</name>
    <name type="ORF">DDB_G0279919</name>
</gene>
<reference key="1">
    <citation type="journal article" date="2005" name="Nature">
        <title>The genome of the social amoeba Dictyostelium discoideum.</title>
        <authorList>
            <person name="Eichinger L."/>
            <person name="Pachebat J.A."/>
            <person name="Gloeckner G."/>
            <person name="Rajandream M.A."/>
            <person name="Sucgang R."/>
            <person name="Berriman M."/>
            <person name="Song J."/>
            <person name="Olsen R."/>
            <person name="Szafranski K."/>
            <person name="Xu Q."/>
            <person name="Tunggal B."/>
            <person name="Kummerfeld S."/>
            <person name="Madera M."/>
            <person name="Konfortov B.A."/>
            <person name="Rivero F."/>
            <person name="Bankier A.T."/>
            <person name="Lehmann R."/>
            <person name="Hamlin N."/>
            <person name="Davies R."/>
            <person name="Gaudet P."/>
            <person name="Fey P."/>
            <person name="Pilcher K."/>
            <person name="Chen G."/>
            <person name="Saunders D."/>
            <person name="Sodergren E.J."/>
            <person name="Davis P."/>
            <person name="Kerhornou A."/>
            <person name="Nie X."/>
            <person name="Hall N."/>
            <person name="Anjard C."/>
            <person name="Hemphill L."/>
            <person name="Bason N."/>
            <person name="Farbrother P."/>
            <person name="Desany B."/>
            <person name="Just E."/>
            <person name="Morio T."/>
            <person name="Rost R."/>
            <person name="Churcher C.M."/>
            <person name="Cooper J."/>
            <person name="Haydock S."/>
            <person name="van Driessche N."/>
            <person name="Cronin A."/>
            <person name="Goodhead I."/>
            <person name="Muzny D.M."/>
            <person name="Mourier T."/>
            <person name="Pain A."/>
            <person name="Lu M."/>
            <person name="Harper D."/>
            <person name="Lindsay R."/>
            <person name="Hauser H."/>
            <person name="James K.D."/>
            <person name="Quiles M."/>
            <person name="Madan Babu M."/>
            <person name="Saito T."/>
            <person name="Buchrieser C."/>
            <person name="Wardroper A."/>
            <person name="Felder M."/>
            <person name="Thangavelu M."/>
            <person name="Johnson D."/>
            <person name="Knights A."/>
            <person name="Loulseged H."/>
            <person name="Mungall K.L."/>
            <person name="Oliver K."/>
            <person name="Price C."/>
            <person name="Quail M.A."/>
            <person name="Urushihara H."/>
            <person name="Hernandez J."/>
            <person name="Rabbinowitsch E."/>
            <person name="Steffen D."/>
            <person name="Sanders M."/>
            <person name="Ma J."/>
            <person name="Kohara Y."/>
            <person name="Sharp S."/>
            <person name="Simmonds M.N."/>
            <person name="Spiegler S."/>
            <person name="Tivey A."/>
            <person name="Sugano S."/>
            <person name="White B."/>
            <person name="Walker D."/>
            <person name="Woodward J.R."/>
            <person name="Winckler T."/>
            <person name="Tanaka Y."/>
            <person name="Shaulsky G."/>
            <person name="Schleicher M."/>
            <person name="Weinstock G.M."/>
            <person name="Rosenthal A."/>
            <person name="Cox E.C."/>
            <person name="Chisholm R.L."/>
            <person name="Gibbs R.A."/>
            <person name="Loomis W.F."/>
            <person name="Platzer M."/>
            <person name="Kay R.R."/>
            <person name="Williams J.G."/>
            <person name="Dear P.H."/>
            <person name="Noegel A.A."/>
            <person name="Barrell B.G."/>
            <person name="Kuspa A."/>
        </authorList>
    </citation>
    <scope>NUCLEOTIDE SEQUENCE [LARGE SCALE GENOMIC DNA]</scope>
    <source>
        <strain>AX4</strain>
    </source>
</reference>
<evidence type="ECO:0000255" key="1"/>
<evidence type="ECO:0000255" key="2">
    <source>
        <dbReference type="PROSITE-ProRule" id="PRU00434"/>
    </source>
</evidence>
<evidence type="ECO:0000255" key="3">
    <source>
        <dbReference type="PROSITE-ProRule" id="PRU00441"/>
    </source>
</evidence>
<evidence type="ECO:0000256" key="4">
    <source>
        <dbReference type="SAM" id="MobiDB-lite"/>
    </source>
</evidence>
<evidence type="ECO:0000305" key="5"/>
<organism>
    <name type="scientific">Dictyostelium discoideum</name>
    <name type="common">Social amoeba</name>
    <dbReference type="NCBI Taxonomy" id="44689"/>
    <lineage>
        <taxon>Eukaryota</taxon>
        <taxon>Amoebozoa</taxon>
        <taxon>Evosea</taxon>
        <taxon>Eumycetozoa</taxon>
        <taxon>Dictyostelia</taxon>
        <taxon>Dictyosteliales</taxon>
        <taxon>Dictyosteliaceae</taxon>
        <taxon>Dictyostelium</taxon>
    </lineage>
</organism>
<accession>Q54W20</accession>